<organism>
    <name type="scientific">Mus musculus</name>
    <name type="common">Mouse</name>
    <dbReference type="NCBI Taxonomy" id="10090"/>
    <lineage>
        <taxon>Eukaryota</taxon>
        <taxon>Metazoa</taxon>
        <taxon>Chordata</taxon>
        <taxon>Craniata</taxon>
        <taxon>Vertebrata</taxon>
        <taxon>Euteleostomi</taxon>
        <taxon>Mammalia</taxon>
        <taxon>Eutheria</taxon>
        <taxon>Euarchontoglires</taxon>
        <taxon>Glires</taxon>
        <taxon>Rodentia</taxon>
        <taxon>Myomorpha</taxon>
        <taxon>Muroidea</taxon>
        <taxon>Muridae</taxon>
        <taxon>Murinae</taxon>
        <taxon>Mus</taxon>
        <taxon>Mus</taxon>
    </lineage>
</organism>
<comment type="function">
    <text>Receptor for the pro-inflammatory cytokines IL17B and IL17E. May play a role in controlling the growth and/or differentiation of hematopoietic cells.</text>
</comment>
<comment type="subunit">
    <text evidence="2">Interacts with DAZAP2. Interacts with TRAF3IP2.</text>
</comment>
<comment type="subcellular location">
    <molecule>Isoform 1</molecule>
    <subcellularLocation>
        <location>Cell membrane</location>
        <topology>Single-pass type I membrane protein</topology>
    </subcellularLocation>
</comment>
<comment type="subcellular location">
    <molecule>Isoform 2</molecule>
    <subcellularLocation>
        <location>Secreted</location>
    </subcellularLocation>
</comment>
<comment type="alternative products">
    <event type="alternative splicing"/>
    <isoform>
        <id>Q9JIP3-1</id>
        <name>1</name>
        <sequence type="displayed"/>
    </isoform>
    <isoform>
        <id>Q9JIP3-2</id>
        <name>2</name>
        <sequence type="described" ref="VSP_001742 VSP_001743"/>
    </isoform>
</comment>
<comment type="tissue specificity">
    <text>Liver and testis. Expressed at lower level in kidney and lung. Expressed in selected T-cell, B-cell and myeloid cell lines.</text>
</comment>
<comment type="miscellaneous">
    <text>Evi27 is a common site of retroviral integration in Bxh2 murine myeloid leukemias, localized near the Il17rb gene. Proviral integrations result in increased expression of Il17rb on the cell surface.</text>
</comment>
<proteinExistence type="evidence at protein level"/>
<feature type="signal peptide" evidence="1">
    <location>
        <begin position="1"/>
        <end position="17"/>
    </location>
</feature>
<feature type="chain" id="PRO_0000011033" description="Interleukin-17 receptor B">
    <location>
        <begin position="18"/>
        <end position="499"/>
    </location>
</feature>
<feature type="topological domain" description="Extracellular" evidence="3">
    <location>
        <begin position="18"/>
        <end position="286"/>
    </location>
</feature>
<feature type="transmembrane region" description="Helical" evidence="3">
    <location>
        <begin position="287"/>
        <end position="307"/>
    </location>
</feature>
<feature type="topological domain" description="Cytoplasmic" evidence="3">
    <location>
        <begin position="308"/>
        <end position="499"/>
    </location>
</feature>
<feature type="domain" description="SEFIR" evidence="4">
    <location>
        <begin position="328"/>
        <end position="474"/>
    </location>
</feature>
<feature type="glycosylation site" description="N-linked (GlcNAc...) asparagine" evidence="3">
    <location>
        <position position="67"/>
    </location>
</feature>
<feature type="glycosylation site" description="N-linked (GlcNAc...) asparagine" evidence="3">
    <location>
        <position position="103"/>
    </location>
</feature>
<feature type="glycosylation site" description="N-linked (GlcNAc...) asparagine" evidence="3">
    <location>
        <position position="156"/>
    </location>
</feature>
<feature type="glycosylation site" description="N-linked (GlcNAc...) asparagine" evidence="3">
    <location>
        <position position="197"/>
    </location>
</feature>
<feature type="splice variant" id="VSP_001742" description="In isoform 2." evidence="5">
    <original>LNHVMKYKKQCTEAGSLWDPDITACKKNEKMVEVNFTTNPLGNRYTILIQRDTTLG</original>
    <variation>TRENTEVTSGVFPAAKHQALRISAPFPLQFPPGPEDSVILPPQPLASLFHDFVKLT</variation>
    <location>
        <begin position="163"/>
        <end position="218"/>
    </location>
</feature>
<feature type="splice variant" id="VSP_001743" description="In isoform 2." evidence="5">
    <location>
        <begin position="219"/>
        <end position="499"/>
    </location>
</feature>
<feature type="strand" evidence="6">
    <location>
        <begin position="329"/>
        <end position="334"/>
    </location>
</feature>
<feature type="helix" evidence="6">
    <location>
        <begin position="339"/>
        <end position="341"/>
    </location>
</feature>
<feature type="helix" evidence="6">
    <location>
        <begin position="342"/>
        <end position="354"/>
    </location>
</feature>
<feature type="strand" evidence="6">
    <location>
        <begin position="358"/>
        <end position="362"/>
    </location>
</feature>
<feature type="helix" evidence="6">
    <location>
        <begin position="363"/>
        <end position="365"/>
    </location>
</feature>
<feature type="helix" evidence="6">
    <location>
        <begin position="367"/>
        <end position="373"/>
    </location>
</feature>
<feature type="helix" evidence="6">
    <location>
        <begin position="375"/>
        <end position="385"/>
    </location>
</feature>
<feature type="strand" evidence="6">
    <location>
        <begin position="387"/>
        <end position="393"/>
    </location>
</feature>
<feature type="helix" evidence="6">
    <location>
        <begin position="419"/>
        <end position="427"/>
    </location>
</feature>
<feature type="helix" evidence="6">
    <location>
        <begin position="428"/>
        <end position="430"/>
    </location>
</feature>
<feature type="strand" evidence="6">
    <location>
        <begin position="434"/>
        <end position="436"/>
    </location>
</feature>
<feature type="strand" evidence="6">
    <location>
        <begin position="440"/>
        <end position="444"/>
    </location>
</feature>
<feature type="helix" evidence="6">
    <location>
        <begin position="455"/>
        <end position="459"/>
    </location>
</feature>
<feature type="strand" evidence="6">
    <location>
        <begin position="462"/>
        <end position="464"/>
    </location>
</feature>
<feature type="turn" evidence="6">
    <location>
        <begin position="465"/>
        <end position="468"/>
    </location>
</feature>
<feature type="helix" evidence="6">
    <location>
        <begin position="469"/>
        <end position="478"/>
    </location>
</feature>
<reference key="1">
    <citation type="journal article" date="2000" name="Oncogene">
        <title>Evi27 encodes a novel membrane protein with homology to the IL17 receptor.</title>
        <authorList>
            <person name="Tian E."/>
            <person name="Sawyer J.R."/>
            <person name="Largaespada D.A."/>
            <person name="Jenkins N.A."/>
            <person name="Copeland N.G."/>
            <person name="Shaughnessy J.D. Jr."/>
        </authorList>
    </citation>
    <scope>NUCLEOTIDE SEQUENCE [MRNA] (ISOFORMS 1 AND 2)</scope>
</reference>
<reference key="2">
    <citation type="journal article" date="2004" name="Genome Res.">
        <title>The status, quality, and expansion of the NIH full-length cDNA project: the Mammalian Gene Collection (MGC).</title>
        <authorList>
            <consortium name="The MGC Project Team"/>
        </authorList>
    </citation>
    <scope>NUCLEOTIDE SEQUENCE [LARGE SCALE MRNA] (ISOFORM 1)</scope>
    <source>
        <strain>FVB/N</strain>
        <tissue>Kidney</tissue>
    </source>
</reference>
<keyword id="KW-0002">3D-structure</keyword>
<keyword id="KW-0025">Alternative splicing</keyword>
<keyword id="KW-1003">Cell membrane</keyword>
<keyword id="KW-0325">Glycoprotein</keyword>
<keyword id="KW-0472">Membrane</keyword>
<keyword id="KW-0675">Receptor</keyword>
<keyword id="KW-1185">Reference proteome</keyword>
<keyword id="KW-0964">Secreted</keyword>
<keyword id="KW-0732">Signal</keyword>
<keyword id="KW-0812">Transmembrane</keyword>
<keyword id="KW-1133">Transmembrane helix</keyword>
<name>I17RB_MOUSE</name>
<accession>Q9JIP3</accession>
<accession>Q9JIP2</accession>
<dbReference type="EMBL" id="AF208108">
    <property type="protein sequence ID" value="AAF86049.1"/>
    <property type="molecule type" value="mRNA"/>
</dbReference>
<dbReference type="EMBL" id="AF208109">
    <property type="protein sequence ID" value="AAF86050.1"/>
    <property type="molecule type" value="mRNA"/>
</dbReference>
<dbReference type="EMBL" id="BC026546">
    <property type="protein sequence ID" value="AAH26546.1"/>
    <property type="molecule type" value="mRNA"/>
</dbReference>
<dbReference type="CCDS" id="CCDS36845.1">
    <molecule id="Q9JIP3-1"/>
</dbReference>
<dbReference type="RefSeq" id="NP_062529.2">
    <molecule id="Q9JIP3-1"/>
    <property type="nucleotide sequence ID" value="NM_019583.3"/>
</dbReference>
<dbReference type="PDB" id="3VBC">
    <property type="method" value="X-ray"/>
    <property type="resolution" value="1.80 A"/>
    <property type="chains" value="A=325-486"/>
</dbReference>
<dbReference type="PDBsum" id="3VBC"/>
<dbReference type="SMR" id="Q9JIP3"/>
<dbReference type="BioGRID" id="206146">
    <property type="interactions" value="2"/>
</dbReference>
<dbReference type="FunCoup" id="Q9JIP3">
    <property type="interactions" value="511"/>
</dbReference>
<dbReference type="IntAct" id="Q9JIP3">
    <property type="interactions" value="1"/>
</dbReference>
<dbReference type="STRING" id="10090.ENSMUSP00000016110"/>
<dbReference type="GlyCosmos" id="Q9JIP3">
    <property type="glycosylation" value="4 sites, No reported glycans"/>
</dbReference>
<dbReference type="GlyGen" id="Q9JIP3">
    <property type="glycosylation" value="4 sites, 1 N-linked glycan (1 site)"/>
</dbReference>
<dbReference type="iPTMnet" id="Q9JIP3"/>
<dbReference type="PhosphoSitePlus" id="Q9JIP3"/>
<dbReference type="PaxDb" id="10090-ENSMUSP00000016110"/>
<dbReference type="ProteomicsDB" id="273070">
    <molecule id="Q9JIP3-1"/>
</dbReference>
<dbReference type="ProteomicsDB" id="273071">
    <molecule id="Q9JIP3-2"/>
</dbReference>
<dbReference type="ABCD" id="Q9JIP3">
    <property type="antibodies" value="6 sequenced antibodies"/>
</dbReference>
<dbReference type="Antibodypedia" id="1155">
    <property type="antibodies" value="523 antibodies from 34 providers"/>
</dbReference>
<dbReference type="DNASU" id="50905"/>
<dbReference type="Ensembl" id="ENSMUST00000016110.13">
    <molecule id="Q9JIP3-1"/>
    <property type="protein sequence ID" value="ENSMUSP00000016110.7"/>
    <property type="gene ID" value="ENSMUSG00000015966.18"/>
</dbReference>
<dbReference type="GeneID" id="50905"/>
<dbReference type="KEGG" id="mmu:50905"/>
<dbReference type="UCSC" id="uc007sun.1">
    <molecule id="Q9JIP3-1"/>
    <property type="organism name" value="mouse"/>
</dbReference>
<dbReference type="AGR" id="MGI:1355292"/>
<dbReference type="CTD" id="55540"/>
<dbReference type="MGI" id="MGI:1355292">
    <property type="gene designation" value="Il17rb"/>
</dbReference>
<dbReference type="VEuPathDB" id="HostDB:ENSMUSG00000015966"/>
<dbReference type="eggNOG" id="ENOG502RD98">
    <property type="taxonomic scope" value="Eukaryota"/>
</dbReference>
<dbReference type="GeneTree" id="ENSGT00940000161145"/>
<dbReference type="HOGENOM" id="CLU_037593_0_0_1"/>
<dbReference type="InParanoid" id="Q9JIP3"/>
<dbReference type="OMA" id="HKYMVVY"/>
<dbReference type="OrthoDB" id="28073at9989"/>
<dbReference type="BioGRID-ORCS" id="50905">
    <property type="hits" value="5 hits in 78 CRISPR screens"/>
</dbReference>
<dbReference type="EvolutionaryTrace" id="Q9JIP3"/>
<dbReference type="PRO" id="PR:Q9JIP3"/>
<dbReference type="Proteomes" id="UP000000589">
    <property type="component" value="Chromosome 14"/>
</dbReference>
<dbReference type="RNAct" id="Q9JIP3">
    <property type="molecule type" value="protein"/>
</dbReference>
<dbReference type="Bgee" id="ENSMUSG00000015966">
    <property type="expression patterns" value="Expressed in secondary oocyte and 98 other cell types or tissues"/>
</dbReference>
<dbReference type="ExpressionAtlas" id="Q9JIP3">
    <property type="expression patterns" value="baseline and differential"/>
</dbReference>
<dbReference type="GO" id="GO:0009986">
    <property type="term" value="C:cell surface"/>
    <property type="evidence" value="ECO:0000314"/>
    <property type="project" value="MGI"/>
</dbReference>
<dbReference type="GO" id="GO:0005737">
    <property type="term" value="C:cytoplasm"/>
    <property type="evidence" value="ECO:0000314"/>
    <property type="project" value="MGI"/>
</dbReference>
<dbReference type="GO" id="GO:0005576">
    <property type="term" value="C:extracellular region"/>
    <property type="evidence" value="ECO:0007669"/>
    <property type="project" value="UniProtKB-SubCell"/>
</dbReference>
<dbReference type="GO" id="GO:0043231">
    <property type="term" value="C:intracellular membrane-bounded organelle"/>
    <property type="evidence" value="ECO:0007669"/>
    <property type="project" value="Ensembl"/>
</dbReference>
<dbReference type="GO" id="GO:0005886">
    <property type="term" value="C:plasma membrane"/>
    <property type="evidence" value="ECO:0000250"/>
    <property type="project" value="MGI"/>
</dbReference>
<dbReference type="GO" id="GO:0004896">
    <property type="term" value="F:cytokine receptor activity"/>
    <property type="evidence" value="ECO:0000250"/>
    <property type="project" value="MGI"/>
</dbReference>
<dbReference type="GO" id="GO:0030368">
    <property type="term" value="F:interleukin-17 receptor activity"/>
    <property type="evidence" value="ECO:0007669"/>
    <property type="project" value="InterPro"/>
</dbReference>
<dbReference type="GO" id="GO:0050729">
    <property type="term" value="P:positive regulation of inflammatory response"/>
    <property type="evidence" value="ECO:0000315"/>
    <property type="project" value="MGI"/>
</dbReference>
<dbReference type="GO" id="GO:0032736">
    <property type="term" value="P:positive regulation of interleukin-13 production"/>
    <property type="evidence" value="ECO:0000315"/>
    <property type="project" value="MGI"/>
</dbReference>
<dbReference type="GO" id="GO:0032754">
    <property type="term" value="P:positive regulation of interleukin-5 production"/>
    <property type="evidence" value="ECO:0000315"/>
    <property type="project" value="MGI"/>
</dbReference>
<dbReference type="DisProt" id="DP02695"/>
<dbReference type="FunFam" id="2.60.40.2150:FF:000001">
    <property type="entry name" value="Interleukin 17 receptor B"/>
    <property type="match status" value="1"/>
</dbReference>
<dbReference type="FunFam" id="2.60.40.2160:FF:000002">
    <property type="entry name" value="Interleukin 17 receptor B"/>
    <property type="match status" value="1"/>
</dbReference>
<dbReference type="FunFam" id="3.40.50.11530:FF:000004">
    <property type="entry name" value="Interleukin 17 receptor B"/>
    <property type="match status" value="1"/>
</dbReference>
<dbReference type="Gene3D" id="3.40.50.11530">
    <property type="match status" value="1"/>
</dbReference>
<dbReference type="Gene3D" id="2.60.40.2160">
    <property type="entry name" value="Interleukin-17 receptor A/B, fibronectin-III-like domain 1"/>
    <property type="match status" value="1"/>
</dbReference>
<dbReference type="Gene3D" id="2.60.40.2150">
    <property type="entry name" value="Interleukin-17 receptor A/B, fibronectin-III-like domain 2"/>
    <property type="match status" value="1"/>
</dbReference>
<dbReference type="InterPro" id="IPR039465">
    <property type="entry name" value="IL-17_rcpt-like"/>
</dbReference>
<dbReference type="InterPro" id="IPR032356">
    <property type="entry name" value="IL17R_fnIII_D1"/>
</dbReference>
<dbReference type="InterPro" id="IPR038683">
    <property type="entry name" value="IL17RA/B_FnIII-like_1_sf"/>
</dbReference>
<dbReference type="InterPro" id="IPR043046">
    <property type="entry name" value="IL17RA/B_FnIII-like_2_sf"/>
</dbReference>
<dbReference type="InterPro" id="IPR013568">
    <property type="entry name" value="SEFIR_dom"/>
</dbReference>
<dbReference type="PANTHER" id="PTHR15583">
    <property type="entry name" value="INTERLEUKIN-17 RECEPTOR"/>
    <property type="match status" value="1"/>
</dbReference>
<dbReference type="PANTHER" id="PTHR15583:SF11">
    <property type="entry name" value="INTERLEUKIN-17 RECEPTOR B"/>
    <property type="match status" value="1"/>
</dbReference>
<dbReference type="Pfam" id="PF16556">
    <property type="entry name" value="IL17R_fnIII_D1"/>
    <property type="match status" value="1"/>
</dbReference>
<dbReference type="Pfam" id="PF16578">
    <property type="entry name" value="IL17R_fnIII_D2"/>
    <property type="match status" value="1"/>
</dbReference>
<dbReference type="Pfam" id="PF08357">
    <property type="entry name" value="SEFIR"/>
    <property type="match status" value="1"/>
</dbReference>
<dbReference type="PROSITE" id="PS51534">
    <property type="entry name" value="SEFIR"/>
    <property type="match status" value="1"/>
</dbReference>
<sequence length="499" mass="55617">MLLVLLILAASCRSALPREPTIQCGSETGPSPEWMVQHTLTPGDLRDLQVELVKTSVAAEEFSILMNISWILRADASIRLLKATKICVSGKNNMNSYSCVRCNYTEAFQSQTRPSGGKWTFSYVGFPVELSTLYLISAHNIPNANMNEDSPSLSVNFTSPGCLNHVMKYKKQCTEAGSLWDPDITACKKNEKMVEVNFTTNPLGNRYTILIQRDTTLGFSRVLENKLMRTSVAIPVTEESEGAVVQLTPYLHTCGNDCIRREGTVVLCSETSAPIPPDDNRRMLGGWLPLFLVLLVAVWVLAAGIYLTWRQGRSTKTSFPISTMLLPLIKVLVVYPSEICFHHTVCRFTDFLQNYCRSEVILEKWQKKKIAEMGPVQWLTTQKQAADKVVFLLPSDVPTLCDSACGHNEGSARENSQDLFPLAFNLFCSDFSSQTHLHKYLVVYLGGADLKGDYNALSVCPQYHLMKDATAFHTELLKATQSMSVKKRSQACHDSCSPL</sequence>
<evidence type="ECO:0000250" key="1"/>
<evidence type="ECO:0000250" key="2">
    <source>
        <dbReference type="UniProtKB" id="Q9NRM6"/>
    </source>
</evidence>
<evidence type="ECO:0000255" key="3"/>
<evidence type="ECO:0000255" key="4">
    <source>
        <dbReference type="PROSITE-ProRule" id="PRU00867"/>
    </source>
</evidence>
<evidence type="ECO:0000303" key="5">
    <source>
    </source>
</evidence>
<evidence type="ECO:0007829" key="6">
    <source>
        <dbReference type="PDB" id="3VBC"/>
    </source>
</evidence>
<gene>
    <name type="primary">Il17rb</name>
    <name type="synonym">Evi27</name>
    <name type="synonym">Il17br</name>
</gene>
<protein>
    <recommendedName>
        <fullName>Interleukin-17 receptor B</fullName>
        <shortName>IL-17 receptor B</shortName>
        <shortName>IL-17RB</shortName>
    </recommendedName>
    <alternativeName>
        <fullName>IL-17 receptor homolog 1</fullName>
        <shortName>IL-17ER</shortName>
        <shortName>IL-17Rh1</shortName>
        <shortName>IL17Rh1</shortName>
    </alternativeName>
    <alternativeName>
        <fullName>Interleukin-17B receptor</fullName>
        <shortName>IL-17B receptor</shortName>
    </alternativeName>
</protein>